<comment type="function">
    <text evidence="1">Specifically methylates the N4 position of cytidine in position 1402 (C1402) of 16S rRNA.</text>
</comment>
<comment type="catalytic activity">
    <reaction evidence="1">
        <text>cytidine(1402) in 16S rRNA + S-adenosyl-L-methionine = N(4)-methylcytidine(1402) in 16S rRNA + S-adenosyl-L-homocysteine + H(+)</text>
        <dbReference type="Rhea" id="RHEA:42928"/>
        <dbReference type="Rhea" id="RHEA-COMP:10286"/>
        <dbReference type="Rhea" id="RHEA-COMP:10287"/>
        <dbReference type="ChEBI" id="CHEBI:15378"/>
        <dbReference type="ChEBI" id="CHEBI:57856"/>
        <dbReference type="ChEBI" id="CHEBI:59789"/>
        <dbReference type="ChEBI" id="CHEBI:74506"/>
        <dbReference type="ChEBI" id="CHEBI:82748"/>
        <dbReference type="EC" id="2.1.1.199"/>
    </reaction>
</comment>
<comment type="subcellular location">
    <subcellularLocation>
        <location evidence="1">Cytoplasm</location>
    </subcellularLocation>
</comment>
<comment type="similarity">
    <text evidence="1">Belongs to the methyltransferase superfamily. RsmH family.</text>
</comment>
<protein>
    <recommendedName>
        <fullName evidence="1">Ribosomal RNA small subunit methyltransferase H</fullName>
        <ecNumber evidence="1">2.1.1.199</ecNumber>
    </recommendedName>
    <alternativeName>
        <fullName evidence="1">16S rRNA m(4)C1402 methyltransferase</fullName>
    </alternativeName>
    <alternativeName>
        <fullName evidence="1">rRNA (cytosine-N(4)-)-methyltransferase RsmH</fullName>
    </alternativeName>
</protein>
<keyword id="KW-0963">Cytoplasm</keyword>
<keyword id="KW-0489">Methyltransferase</keyword>
<keyword id="KW-1185">Reference proteome</keyword>
<keyword id="KW-0698">rRNA processing</keyword>
<keyword id="KW-0949">S-adenosyl-L-methionine</keyword>
<keyword id="KW-0808">Transferase</keyword>
<sequence length="353" mass="38506">MAANTPHDPSSPGHVPVMRQRMVELVGIGVTAGSAPAQPIIVDGTLGAGGHTEAFLEAYPNAIVIGLDRDPNALAEARARLERFGQRFFSYQTRFDGIGEALEHFSEDPDFPVDIREQGISGFLFDLGVSSMQLDQEDRGFAYRVDAPLDMRMDPSSRLTAAEILNTYEHGELARILKRYGDEKFAGKIASAVIREREKQPFENSARLVDLLYATIPAAARRTGGHPAKRTFQALRIEVNAELESLELVIPAAFSWLRVDGAGVFMSYQSLEDKIVKQQLKGMTESSTPPGLPVELPGTEPEFELLTRGAEKASEQEIAENSRSAPVRVRAARRIGAHASGAGGPRYPLVSTH</sequence>
<gene>
    <name evidence="1" type="primary">rsmH</name>
    <name type="synonym">mraW</name>
    <name type="ordered locus">cu1213</name>
</gene>
<name>RSMH_CORU7</name>
<feature type="chain" id="PRO_0000386830" description="Ribosomal RNA small subunit methyltransferase H">
    <location>
        <begin position="1"/>
        <end position="353"/>
    </location>
</feature>
<feature type="binding site" evidence="1">
    <location>
        <begin position="49"/>
        <end position="51"/>
    </location>
    <ligand>
        <name>S-adenosyl-L-methionine</name>
        <dbReference type="ChEBI" id="CHEBI:59789"/>
    </ligand>
</feature>
<feature type="binding site" evidence="1">
    <location>
        <position position="68"/>
    </location>
    <ligand>
        <name>S-adenosyl-L-methionine</name>
        <dbReference type="ChEBI" id="CHEBI:59789"/>
    </ligand>
</feature>
<feature type="binding site" evidence="1">
    <location>
        <position position="95"/>
    </location>
    <ligand>
        <name>S-adenosyl-L-methionine</name>
        <dbReference type="ChEBI" id="CHEBI:59789"/>
    </ligand>
</feature>
<feature type="binding site" evidence="1">
    <location>
        <position position="126"/>
    </location>
    <ligand>
        <name>S-adenosyl-L-methionine</name>
        <dbReference type="ChEBI" id="CHEBI:59789"/>
    </ligand>
</feature>
<feature type="binding site" evidence="1">
    <location>
        <position position="133"/>
    </location>
    <ligand>
        <name>S-adenosyl-L-methionine</name>
        <dbReference type="ChEBI" id="CHEBI:59789"/>
    </ligand>
</feature>
<evidence type="ECO:0000255" key="1">
    <source>
        <dbReference type="HAMAP-Rule" id="MF_01007"/>
    </source>
</evidence>
<proteinExistence type="inferred from homology"/>
<organism>
    <name type="scientific">Corynebacterium urealyticum (strain ATCC 43042 / DSM 7109)</name>
    <dbReference type="NCBI Taxonomy" id="504474"/>
    <lineage>
        <taxon>Bacteria</taxon>
        <taxon>Bacillati</taxon>
        <taxon>Actinomycetota</taxon>
        <taxon>Actinomycetes</taxon>
        <taxon>Mycobacteriales</taxon>
        <taxon>Corynebacteriaceae</taxon>
        <taxon>Corynebacterium</taxon>
    </lineage>
</organism>
<accession>B1VHD2</accession>
<reference key="1">
    <citation type="journal article" date="2008" name="J. Biotechnol.">
        <title>The lifestyle of Corynebacterium urealyticum derived from its complete genome sequence established by pyrosequencing.</title>
        <authorList>
            <person name="Tauch A."/>
            <person name="Trost E."/>
            <person name="Tilker A."/>
            <person name="Ludewig U."/>
            <person name="Schneiker S."/>
            <person name="Goesmann A."/>
            <person name="Arnold W."/>
            <person name="Bekel T."/>
            <person name="Brinkrolf K."/>
            <person name="Brune I."/>
            <person name="Goetker S."/>
            <person name="Kalinowski J."/>
            <person name="Kamp P.-B."/>
            <person name="Lobo F.P."/>
            <person name="Viehoever P."/>
            <person name="Weisshaar B."/>
            <person name="Soriano F."/>
            <person name="Droege M."/>
            <person name="Puehler A."/>
        </authorList>
    </citation>
    <scope>NUCLEOTIDE SEQUENCE [LARGE SCALE GENOMIC DNA]</scope>
    <source>
        <strain>ATCC 43042 / DSM 7109</strain>
    </source>
</reference>
<dbReference type="EC" id="2.1.1.199" evidence="1"/>
<dbReference type="EMBL" id="AM942444">
    <property type="protein sequence ID" value="CAQ05173.1"/>
    <property type="molecule type" value="Genomic_DNA"/>
</dbReference>
<dbReference type="RefSeq" id="WP_012360461.1">
    <property type="nucleotide sequence ID" value="NC_010545.1"/>
</dbReference>
<dbReference type="SMR" id="B1VHD2"/>
<dbReference type="STRING" id="504474.cu1213"/>
<dbReference type="GeneID" id="60603994"/>
<dbReference type="KEGG" id="cur:cu1213"/>
<dbReference type="eggNOG" id="COG0275">
    <property type="taxonomic scope" value="Bacteria"/>
</dbReference>
<dbReference type="HOGENOM" id="CLU_038422_0_0_11"/>
<dbReference type="Proteomes" id="UP000001727">
    <property type="component" value="Chromosome"/>
</dbReference>
<dbReference type="GO" id="GO:0005737">
    <property type="term" value="C:cytoplasm"/>
    <property type="evidence" value="ECO:0007669"/>
    <property type="project" value="UniProtKB-SubCell"/>
</dbReference>
<dbReference type="GO" id="GO:0071424">
    <property type="term" value="F:rRNA (cytosine-N4-)-methyltransferase activity"/>
    <property type="evidence" value="ECO:0007669"/>
    <property type="project" value="UniProtKB-UniRule"/>
</dbReference>
<dbReference type="GO" id="GO:0070475">
    <property type="term" value="P:rRNA base methylation"/>
    <property type="evidence" value="ECO:0007669"/>
    <property type="project" value="UniProtKB-UniRule"/>
</dbReference>
<dbReference type="FunFam" id="1.10.150.170:FF:000001">
    <property type="entry name" value="Ribosomal RNA small subunit methyltransferase H"/>
    <property type="match status" value="1"/>
</dbReference>
<dbReference type="Gene3D" id="1.10.150.170">
    <property type="entry name" value="Putative methyltransferase TM0872, insert domain"/>
    <property type="match status" value="1"/>
</dbReference>
<dbReference type="Gene3D" id="3.40.50.150">
    <property type="entry name" value="Vaccinia Virus protein VP39"/>
    <property type="match status" value="1"/>
</dbReference>
<dbReference type="HAMAP" id="MF_01007">
    <property type="entry name" value="16SrRNA_methyltr_H"/>
    <property type="match status" value="1"/>
</dbReference>
<dbReference type="InterPro" id="IPR002903">
    <property type="entry name" value="RsmH"/>
</dbReference>
<dbReference type="InterPro" id="IPR023397">
    <property type="entry name" value="SAM-dep_MeTrfase_MraW_recog"/>
</dbReference>
<dbReference type="InterPro" id="IPR029063">
    <property type="entry name" value="SAM-dependent_MTases_sf"/>
</dbReference>
<dbReference type="NCBIfam" id="TIGR00006">
    <property type="entry name" value="16S rRNA (cytosine(1402)-N(4))-methyltransferase RsmH"/>
    <property type="match status" value="1"/>
</dbReference>
<dbReference type="PANTHER" id="PTHR11265:SF0">
    <property type="entry name" value="12S RRNA N4-METHYLCYTIDINE METHYLTRANSFERASE"/>
    <property type="match status" value="1"/>
</dbReference>
<dbReference type="PANTHER" id="PTHR11265">
    <property type="entry name" value="S-ADENOSYL-METHYLTRANSFERASE MRAW"/>
    <property type="match status" value="1"/>
</dbReference>
<dbReference type="Pfam" id="PF01795">
    <property type="entry name" value="Methyltransf_5"/>
    <property type="match status" value="1"/>
</dbReference>
<dbReference type="PIRSF" id="PIRSF004486">
    <property type="entry name" value="MraW"/>
    <property type="match status" value="1"/>
</dbReference>
<dbReference type="SUPFAM" id="SSF81799">
    <property type="entry name" value="Putative methyltransferase TM0872, insert domain"/>
    <property type="match status" value="1"/>
</dbReference>
<dbReference type="SUPFAM" id="SSF53335">
    <property type="entry name" value="S-adenosyl-L-methionine-dependent methyltransferases"/>
    <property type="match status" value="1"/>
</dbReference>